<reference key="1">
    <citation type="submission" date="2006-06" db="EMBL/GenBank/DDBJ databases">
        <authorList>
            <person name="Ying T."/>
            <person name="Zhang J."/>
            <person name="Wu F."/>
            <person name="Zhang H."/>
            <person name="Kong J."/>
            <person name="Li Y."/>
        </authorList>
    </citation>
    <scope>NUCLEOTIDE SEQUENCE [MRNA]</scope>
</reference>
<organism>
    <name type="scientific">Bungarus multicinctus</name>
    <name type="common">Many-banded krait</name>
    <dbReference type="NCBI Taxonomy" id="8616"/>
    <lineage>
        <taxon>Eukaryota</taxon>
        <taxon>Metazoa</taxon>
        <taxon>Chordata</taxon>
        <taxon>Craniata</taxon>
        <taxon>Vertebrata</taxon>
        <taxon>Euteleostomi</taxon>
        <taxon>Lepidosauria</taxon>
        <taxon>Squamata</taxon>
        <taxon>Bifurcata</taxon>
        <taxon>Unidentata</taxon>
        <taxon>Episquamata</taxon>
        <taxon>Toxicofera</taxon>
        <taxon>Serpentes</taxon>
        <taxon>Colubroidea</taxon>
        <taxon>Elapidae</taxon>
        <taxon>Bungarinae</taxon>
        <taxon>Bungarus</taxon>
    </lineage>
</organism>
<proteinExistence type="evidence at transcript level"/>
<sequence length="61" mass="7134">RQRHPDCDKPPDTKRCTGHNPAFYYNPRRKNCERFSYGGCGGNGNHFKTKQLCHCHCHEND</sequence>
<comment type="function">
    <text evidence="1">Beta-bungarotoxins are presynaptic neurotoxins of the venom. The B chain is homologous to venom basic protease inhibitors but has no protease inhibitor activity and blocks voltage-gated potassium channels (Kv) (By similarity).</text>
</comment>
<comment type="subunit">
    <text evidence="1">Heterodimer; disulfide-linked. The A chains have phospholipase A2 activity and the B chains show homology with the basic protease inhibitors (By similarity).</text>
</comment>
<comment type="subcellular location">
    <subcellularLocation>
        <location evidence="1">Secreted</location>
    </subcellularLocation>
</comment>
<comment type="tissue specificity">
    <text>Expressed by the venom gland.</text>
</comment>
<comment type="similarity">
    <text evidence="3">Belongs to the venom Kunitz-type family.</text>
</comment>
<keyword id="KW-1015">Disulfide bond</keyword>
<keyword id="KW-0872">Ion channel impairing toxin</keyword>
<keyword id="KW-0528">Neurotoxin</keyword>
<keyword id="KW-0632">Potassium channel impairing toxin</keyword>
<keyword id="KW-0638">Presynaptic neurotoxin</keyword>
<keyword id="KW-0964">Secreted</keyword>
<keyword id="KW-0800">Toxin</keyword>
<keyword id="KW-1220">Voltage-gated potassium channel impairing toxin</keyword>
<name>VKTH7_BUNMU</name>
<protein>
    <recommendedName>
        <fullName>Kunitz-type serine protease inhibitor homolog beta-bungarotoxin B5-B chain</fullName>
    </recommendedName>
    <alternativeName>
        <fullName>Beta-bungarotoxin B5 chain</fullName>
    </alternativeName>
</protein>
<evidence type="ECO:0000250" key="1"/>
<evidence type="ECO:0000255" key="2">
    <source>
        <dbReference type="PROSITE-ProRule" id="PRU00031"/>
    </source>
</evidence>
<evidence type="ECO:0000305" key="3"/>
<dbReference type="EMBL" id="DQ810294">
    <property type="protein sequence ID" value="ABG90493.1"/>
    <property type="molecule type" value="mRNA"/>
</dbReference>
<dbReference type="SMR" id="Q0PL65"/>
<dbReference type="GO" id="GO:0005615">
    <property type="term" value="C:extracellular space"/>
    <property type="evidence" value="ECO:0007669"/>
    <property type="project" value="TreeGrafter"/>
</dbReference>
<dbReference type="GO" id="GO:0015459">
    <property type="term" value="F:potassium channel regulator activity"/>
    <property type="evidence" value="ECO:0007669"/>
    <property type="project" value="UniProtKB-KW"/>
</dbReference>
<dbReference type="GO" id="GO:0004867">
    <property type="term" value="F:serine-type endopeptidase inhibitor activity"/>
    <property type="evidence" value="ECO:0007669"/>
    <property type="project" value="InterPro"/>
</dbReference>
<dbReference type="GO" id="GO:0090729">
    <property type="term" value="F:toxin activity"/>
    <property type="evidence" value="ECO:0007669"/>
    <property type="project" value="UniProtKB-KW"/>
</dbReference>
<dbReference type="Gene3D" id="4.10.410.10">
    <property type="entry name" value="Pancreatic trypsin inhibitor Kunitz domain"/>
    <property type="match status" value="1"/>
</dbReference>
<dbReference type="InterPro" id="IPR002223">
    <property type="entry name" value="Kunitz_BPTI"/>
</dbReference>
<dbReference type="InterPro" id="IPR036880">
    <property type="entry name" value="Kunitz_BPTI_sf"/>
</dbReference>
<dbReference type="InterPro" id="IPR020901">
    <property type="entry name" value="Prtase_inh_Kunz-CS"/>
</dbReference>
<dbReference type="InterPro" id="IPR050098">
    <property type="entry name" value="TFPI/VKTCI-like"/>
</dbReference>
<dbReference type="PANTHER" id="PTHR10083:SF217">
    <property type="entry name" value="BOOPHILIN-H2"/>
    <property type="match status" value="1"/>
</dbReference>
<dbReference type="PANTHER" id="PTHR10083">
    <property type="entry name" value="KUNITZ-TYPE PROTEASE INHIBITOR-RELATED"/>
    <property type="match status" value="1"/>
</dbReference>
<dbReference type="Pfam" id="PF00014">
    <property type="entry name" value="Kunitz_BPTI"/>
    <property type="match status" value="1"/>
</dbReference>
<dbReference type="PRINTS" id="PR00759">
    <property type="entry name" value="BASICPTASE"/>
</dbReference>
<dbReference type="SMART" id="SM00131">
    <property type="entry name" value="KU"/>
    <property type="match status" value="1"/>
</dbReference>
<dbReference type="SUPFAM" id="SSF57362">
    <property type="entry name" value="BPTI-like"/>
    <property type="match status" value="1"/>
</dbReference>
<dbReference type="PROSITE" id="PS00280">
    <property type="entry name" value="BPTI_KUNITZ_1"/>
    <property type="match status" value="1"/>
</dbReference>
<dbReference type="PROSITE" id="PS50279">
    <property type="entry name" value="BPTI_KUNITZ_2"/>
    <property type="match status" value="1"/>
</dbReference>
<feature type="chain" id="PRO_0000376877" description="Kunitz-type serine protease inhibitor homolog beta-bungarotoxin B5-B chain">
    <location>
        <begin position="1"/>
        <end position="61"/>
    </location>
</feature>
<feature type="domain" description="BPTI/Kunitz inhibitor" evidence="2">
    <location>
        <begin position="7"/>
        <end position="57"/>
    </location>
</feature>
<feature type="disulfide bond" evidence="2">
    <location>
        <begin position="7"/>
        <end position="57"/>
    </location>
</feature>
<feature type="disulfide bond" evidence="2">
    <location>
        <begin position="16"/>
        <end position="40"/>
    </location>
</feature>
<feature type="disulfide bond" evidence="2">
    <location>
        <begin position="32"/>
        <end position="53"/>
    </location>
</feature>
<feature type="disulfide bond" description="Interchain (with an A chain)" evidence="2">
    <location>
        <position position="55"/>
    </location>
</feature>
<accession>Q0PL65</accession>